<evidence type="ECO:0000255" key="1">
    <source>
        <dbReference type="HAMAP-Rule" id="MF_00375"/>
    </source>
</evidence>
<gene>
    <name evidence="1" type="primary">hemL1</name>
    <name type="ordered locus">BCG9842_B0655</name>
</gene>
<sequence>MKKFDKSIAAFEEAQDLMPGGVNSPVRAFKSVGMNPLFMERGKGSKVYDIDGNEYIDYVLSWGPLIHGHANDRVVEALKSVAERGTSFGAPTEIENKLAKLVIERVPSIEIVRMVNSGTEATMSALRLARGYTGRNKILKFIGCYHGHGDSLLIKAGSGVATLGLPDSPGVPEGVAKNTITVAYNDLESVKYAFEQFGDDIACVIVEPVAGNMGVVPPQPGFLEGLREVTEQNGALLIFDEVMTGFRVAYNCGQGYYGVTPDLTCLGKVIGGGLPVGAYGGKAEIMRQIAPSGPIYQAGTLSGNPLAMAAGYETLVQLTPESYVEFERKAEMLEAGLRKAAEKHGIPHHINRAGSMIGIFFTDEPVINYDAAKSSNLEFFAAYYREMVEQGVFLPPSQFEGLFLSTAHSDADIEATIAAAEIAMSKLK</sequence>
<organism>
    <name type="scientific">Bacillus cereus (strain G9842)</name>
    <dbReference type="NCBI Taxonomy" id="405531"/>
    <lineage>
        <taxon>Bacteria</taxon>
        <taxon>Bacillati</taxon>
        <taxon>Bacillota</taxon>
        <taxon>Bacilli</taxon>
        <taxon>Bacillales</taxon>
        <taxon>Bacillaceae</taxon>
        <taxon>Bacillus</taxon>
        <taxon>Bacillus cereus group</taxon>
    </lineage>
</organism>
<reference key="1">
    <citation type="submission" date="2008-10" db="EMBL/GenBank/DDBJ databases">
        <title>Genome sequence of Bacillus cereus G9842.</title>
        <authorList>
            <person name="Dodson R.J."/>
            <person name="Durkin A.S."/>
            <person name="Rosovitz M.J."/>
            <person name="Rasko D.A."/>
            <person name="Hoffmaster A."/>
            <person name="Ravel J."/>
            <person name="Sutton G."/>
        </authorList>
    </citation>
    <scope>NUCLEOTIDE SEQUENCE [LARGE SCALE GENOMIC DNA]</scope>
    <source>
        <strain>G9842</strain>
    </source>
</reference>
<name>GSA1_BACC2</name>
<feature type="chain" id="PRO_0000382271" description="Glutamate-1-semialdehyde 2,1-aminomutase 1">
    <location>
        <begin position="1"/>
        <end position="428"/>
    </location>
</feature>
<feature type="modified residue" description="N6-(pyridoxal phosphate)lysine" evidence="1">
    <location>
        <position position="268"/>
    </location>
</feature>
<dbReference type="EC" id="5.4.3.8" evidence="1"/>
<dbReference type="EMBL" id="CP001186">
    <property type="protein sequence ID" value="ACK95760.1"/>
    <property type="molecule type" value="Genomic_DNA"/>
</dbReference>
<dbReference type="SMR" id="B7IIX2"/>
<dbReference type="KEGG" id="bcg:BCG9842_B0655"/>
<dbReference type="HOGENOM" id="CLU_016922_1_5_9"/>
<dbReference type="UniPathway" id="UPA00251">
    <property type="reaction ID" value="UER00317"/>
</dbReference>
<dbReference type="Proteomes" id="UP000006744">
    <property type="component" value="Chromosome"/>
</dbReference>
<dbReference type="GO" id="GO:0005737">
    <property type="term" value="C:cytoplasm"/>
    <property type="evidence" value="ECO:0007669"/>
    <property type="project" value="UniProtKB-SubCell"/>
</dbReference>
<dbReference type="GO" id="GO:0042286">
    <property type="term" value="F:glutamate-1-semialdehyde 2,1-aminomutase activity"/>
    <property type="evidence" value="ECO:0007669"/>
    <property type="project" value="UniProtKB-UniRule"/>
</dbReference>
<dbReference type="GO" id="GO:0030170">
    <property type="term" value="F:pyridoxal phosphate binding"/>
    <property type="evidence" value="ECO:0007669"/>
    <property type="project" value="InterPro"/>
</dbReference>
<dbReference type="GO" id="GO:0008483">
    <property type="term" value="F:transaminase activity"/>
    <property type="evidence" value="ECO:0007669"/>
    <property type="project" value="InterPro"/>
</dbReference>
<dbReference type="GO" id="GO:0006782">
    <property type="term" value="P:protoporphyrinogen IX biosynthetic process"/>
    <property type="evidence" value="ECO:0007669"/>
    <property type="project" value="UniProtKB-UniRule"/>
</dbReference>
<dbReference type="CDD" id="cd00610">
    <property type="entry name" value="OAT_like"/>
    <property type="match status" value="1"/>
</dbReference>
<dbReference type="FunFam" id="3.40.640.10:FF:000021">
    <property type="entry name" value="Glutamate-1-semialdehyde 2,1-aminomutase"/>
    <property type="match status" value="1"/>
</dbReference>
<dbReference type="Gene3D" id="3.90.1150.10">
    <property type="entry name" value="Aspartate Aminotransferase, domain 1"/>
    <property type="match status" value="1"/>
</dbReference>
<dbReference type="Gene3D" id="3.40.640.10">
    <property type="entry name" value="Type I PLP-dependent aspartate aminotransferase-like (Major domain)"/>
    <property type="match status" value="1"/>
</dbReference>
<dbReference type="HAMAP" id="MF_00375">
    <property type="entry name" value="HemL_aminotrans_3"/>
    <property type="match status" value="1"/>
</dbReference>
<dbReference type="InterPro" id="IPR004639">
    <property type="entry name" value="4pyrrol_synth_GluAld_NH2Trfase"/>
</dbReference>
<dbReference type="InterPro" id="IPR005814">
    <property type="entry name" value="Aminotrans_3"/>
</dbReference>
<dbReference type="InterPro" id="IPR049704">
    <property type="entry name" value="Aminotrans_3_PPA_site"/>
</dbReference>
<dbReference type="InterPro" id="IPR015424">
    <property type="entry name" value="PyrdxlP-dep_Trfase"/>
</dbReference>
<dbReference type="InterPro" id="IPR015421">
    <property type="entry name" value="PyrdxlP-dep_Trfase_major"/>
</dbReference>
<dbReference type="InterPro" id="IPR015422">
    <property type="entry name" value="PyrdxlP-dep_Trfase_small"/>
</dbReference>
<dbReference type="NCBIfam" id="TIGR00713">
    <property type="entry name" value="hemL"/>
    <property type="match status" value="1"/>
</dbReference>
<dbReference type="NCBIfam" id="NF000818">
    <property type="entry name" value="PRK00062.1"/>
    <property type="match status" value="1"/>
</dbReference>
<dbReference type="PANTHER" id="PTHR43713">
    <property type="entry name" value="GLUTAMATE-1-SEMIALDEHYDE 2,1-AMINOMUTASE"/>
    <property type="match status" value="1"/>
</dbReference>
<dbReference type="PANTHER" id="PTHR43713:SF3">
    <property type="entry name" value="GLUTAMATE-1-SEMIALDEHYDE 2,1-AMINOMUTASE 1, CHLOROPLASTIC-RELATED"/>
    <property type="match status" value="1"/>
</dbReference>
<dbReference type="Pfam" id="PF00202">
    <property type="entry name" value="Aminotran_3"/>
    <property type="match status" value="1"/>
</dbReference>
<dbReference type="SUPFAM" id="SSF53383">
    <property type="entry name" value="PLP-dependent transferases"/>
    <property type="match status" value="1"/>
</dbReference>
<dbReference type="PROSITE" id="PS00600">
    <property type="entry name" value="AA_TRANSFER_CLASS_3"/>
    <property type="match status" value="1"/>
</dbReference>
<proteinExistence type="inferred from homology"/>
<comment type="catalytic activity">
    <reaction evidence="1">
        <text>(S)-4-amino-5-oxopentanoate = 5-aminolevulinate</text>
        <dbReference type="Rhea" id="RHEA:14265"/>
        <dbReference type="ChEBI" id="CHEBI:57501"/>
        <dbReference type="ChEBI" id="CHEBI:356416"/>
        <dbReference type="EC" id="5.4.3.8"/>
    </reaction>
</comment>
<comment type="cofactor">
    <cofactor evidence="1">
        <name>pyridoxal 5'-phosphate</name>
        <dbReference type="ChEBI" id="CHEBI:597326"/>
    </cofactor>
</comment>
<comment type="pathway">
    <text evidence="1">Porphyrin-containing compound metabolism; protoporphyrin-IX biosynthesis; 5-aminolevulinate from L-glutamyl-tRNA(Glu): step 2/2.</text>
</comment>
<comment type="subunit">
    <text evidence="1">Homodimer.</text>
</comment>
<comment type="subcellular location">
    <subcellularLocation>
        <location evidence="1">Cytoplasm</location>
    </subcellularLocation>
</comment>
<comment type="similarity">
    <text evidence="1">Belongs to the class-III pyridoxal-phosphate-dependent aminotransferase family. HemL subfamily.</text>
</comment>
<protein>
    <recommendedName>
        <fullName evidence="1">Glutamate-1-semialdehyde 2,1-aminomutase 1</fullName>
        <shortName evidence="1">GSA 1</shortName>
        <ecNumber evidence="1">5.4.3.8</ecNumber>
    </recommendedName>
    <alternativeName>
        <fullName evidence="1">Glutamate-1-semialdehyde aminotransferase 1</fullName>
        <shortName evidence="1">GSA-AT 1</shortName>
    </alternativeName>
</protein>
<keyword id="KW-0963">Cytoplasm</keyword>
<keyword id="KW-0413">Isomerase</keyword>
<keyword id="KW-0627">Porphyrin biosynthesis</keyword>
<keyword id="KW-0663">Pyridoxal phosphate</keyword>
<accession>B7IIX2</accession>